<accession>K9UJK2</accession>
<dbReference type="EMBL" id="CP003600">
    <property type="protein sequence ID" value="AFY94374.1"/>
    <property type="molecule type" value="Genomic_DNA"/>
</dbReference>
<dbReference type="RefSeq" id="WP_015160509.1">
    <property type="nucleotide sequence ID" value="NC_019697.1"/>
</dbReference>
<dbReference type="PDB" id="5VRE">
    <property type="method" value="X-ray"/>
    <property type="resolution" value="3.30 A"/>
    <property type="chains" value="A/B/C/D=1-203"/>
</dbReference>
<dbReference type="PDBsum" id="5VRE"/>
<dbReference type="SMR" id="K9UJK2"/>
<dbReference type="STRING" id="1173020.Cha6605_3372"/>
<dbReference type="TCDB" id="1.A.78.2.10">
    <property type="family name" value="the k+-selective channel in endosomes and lysosomes (kel) family"/>
</dbReference>
<dbReference type="KEGG" id="cmp:Cha6605_3372"/>
<dbReference type="PATRIC" id="fig|1173020.3.peg.3871"/>
<dbReference type="eggNOG" id="COG3548">
    <property type="taxonomic scope" value="Bacteria"/>
</dbReference>
<dbReference type="HOGENOM" id="CLU_090238_0_0_3"/>
<dbReference type="OrthoDB" id="7626281at2"/>
<dbReference type="Proteomes" id="UP000010366">
    <property type="component" value="Chromosome"/>
</dbReference>
<dbReference type="GO" id="GO:0016020">
    <property type="term" value="C:membrane"/>
    <property type="evidence" value="ECO:0007669"/>
    <property type="project" value="UniProtKB-SubCell"/>
</dbReference>
<dbReference type="GO" id="GO:0042802">
    <property type="term" value="F:identical protein binding"/>
    <property type="evidence" value="ECO:0000353"/>
    <property type="project" value="IntAct"/>
</dbReference>
<dbReference type="GO" id="GO:0005267">
    <property type="term" value="F:potassium channel activity"/>
    <property type="evidence" value="ECO:0000314"/>
    <property type="project" value="UniProtKB"/>
</dbReference>
<dbReference type="GO" id="GO:0015252">
    <property type="term" value="F:proton channel activity"/>
    <property type="evidence" value="ECO:0007669"/>
    <property type="project" value="InterPro"/>
</dbReference>
<dbReference type="GO" id="GO:0071805">
    <property type="term" value="P:potassium ion transmembrane transport"/>
    <property type="evidence" value="ECO:0000314"/>
    <property type="project" value="UniProtKB"/>
</dbReference>
<dbReference type="GO" id="GO:0051289">
    <property type="term" value="P:protein homotetramerization"/>
    <property type="evidence" value="ECO:0000314"/>
    <property type="project" value="UniProtKB"/>
</dbReference>
<dbReference type="InterPro" id="IPR010617">
    <property type="entry name" value="TMEM175-like"/>
</dbReference>
<dbReference type="PANTHER" id="PTHR31462">
    <property type="entry name" value="ENDOSOMAL/LYSOSOMAL POTASSIUM CHANNEL TMEM175"/>
    <property type="match status" value="1"/>
</dbReference>
<dbReference type="PANTHER" id="PTHR31462:SF5">
    <property type="entry name" value="ENDOSOMAL_LYSOSOMAL PROTON CHANNEL TMEM175"/>
    <property type="match status" value="1"/>
</dbReference>
<dbReference type="Pfam" id="PF06736">
    <property type="entry name" value="TMEM175"/>
    <property type="match status" value="1"/>
</dbReference>
<reference key="1">
    <citation type="submission" date="2012-05" db="EMBL/GenBank/DDBJ databases">
        <title>Finished chromosome of genome of Chamaesiphon sp. PCC 6605.</title>
        <authorList>
            <consortium name="US DOE Joint Genome Institute"/>
            <person name="Gugger M."/>
            <person name="Coursin T."/>
            <person name="Rippka R."/>
            <person name="Tandeau De Marsac N."/>
            <person name="Huntemann M."/>
            <person name="Wei C.-L."/>
            <person name="Han J."/>
            <person name="Detter J.C."/>
            <person name="Han C."/>
            <person name="Tapia R."/>
            <person name="Chen A."/>
            <person name="Kyrpides N."/>
            <person name="Mavromatis K."/>
            <person name="Markowitz V."/>
            <person name="Szeto E."/>
            <person name="Ivanova N."/>
            <person name="Pagani I."/>
            <person name="Pati A."/>
            <person name="Goodwin L."/>
            <person name="Nordberg H.P."/>
            <person name="Cantor M.N."/>
            <person name="Hua S.X."/>
            <person name="Woyke T."/>
            <person name="Kerfeld C.A."/>
        </authorList>
    </citation>
    <scope>NUCLEOTIDE SEQUENCE [LARGE SCALE GENOMIC DNA]</scope>
    <source>
        <strain>ATCC 27169 / PCC 6605</strain>
    </source>
</reference>
<reference key="2">
    <citation type="journal article" date="2017" name="Nature">
        <title>The lysosomal potassium channel TMEM175 adopts a novel tetrameric architecture.</title>
        <authorList>
            <person name="Lee C."/>
            <person name="Guo J."/>
            <person name="Zeng W."/>
            <person name="Kim S."/>
            <person name="She J."/>
            <person name="Cang C."/>
            <person name="Ren D."/>
            <person name="Jiang Y."/>
        </authorList>
    </citation>
    <scope>X-RAY CRYSTALLOGRAPHY (3.3 ANGSTROMS) OF 7-203</scope>
    <scope>FUNCTION</scope>
    <scope>TRANSPORTER ACTIVITY</scope>
    <scope>TOPOLOGY</scope>
    <scope>SUBUNIT</scope>
    <scope>DOMAIN</scope>
    <scope>MUTAGENESIS OF ILE-23</scope>
</reference>
<keyword id="KW-0002">3D-structure</keyword>
<keyword id="KW-0407">Ion channel</keyword>
<keyword id="KW-0406">Ion transport</keyword>
<keyword id="KW-0472">Membrane</keyword>
<keyword id="KW-0630">Potassium</keyword>
<keyword id="KW-0631">Potassium channel</keyword>
<keyword id="KW-0633">Potassium transport</keyword>
<keyword id="KW-1185">Reference proteome</keyword>
<keyword id="KW-0812">Transmembrane</keyword>
<keyword id="KW-1133">Transmembrane helix</keyword>
<keyword id="KW-0813">Transport</keyword>
<protein>
    <recommendedName>
        <fullName evidence="4">Potassium channel Cha6605_3372</fullName>
    </recommendedName>
    <alternativeName>
        <fullName evidence="3">Transmembrane protein 175</fullName>
        <shortName evidence="3">CmTMEM175</shortName>
    </alternativeName>
</protein>
<feature type="chain" id="PRO_0000442004" description="Potassium channel Cha6605_3372">
    <location>
        <begin position="1"/>
        <end position="203"/>
    </location>
</feature>
<feature type="topological domain" description="Cytoplasmic" evidence="5">
    <location>
        <begin position="1"/>
        <end position="7"/>
    </location>
</feature>
<feature type="transmembrane region" description="Helical; Name=TM1" evidence="2">
    <location>
        <begin position="8"/>
        <end position="31"/>
    </location>
</feature>
<feature type="topological domain" description="Extracellular" evidence="5">
    <location>
        <begin position="32"/>
        <end position="52"/>
    </location>
</feature>
<feature type="transmembrane region" description="Helical; Name=TM2" evidence="2">
    <location>
        <begin position="53"/>
        <end position="78"/>
    </location>
</feature>
<feature type="topological domain" description="Cytoplasmic" evidence="5">
    <location>
        <begin position="79"/>
        <end position="84"/>
    </location>
</feature>
<feature type="transmembrane region" description="Helical; Name=TM3" evidence="2">
    <location>
        <begin position="85"/>
        <end position="110"/>
    </location>
</feature>
<feature type="topological domain" description="Extracellular" evidence="5">
    <location>
        <begin position="111"/>
        <end position="117"/>
    </location>
</feature>
<feature type="transmembrane region" description="Helical; Name=TM4" evidence="2">
    <location>
        <begin position="118"/>
        <end position="142"/>
    </location>
</feature>
<feature type="topological domain" description="Cytoplasmic" evidence="5">
    <location>
        <begin position="143"/>
        <end position="154"/>
    </location>
</feature>
<feature type="transmembrane region" description="Helical; Name=TM5" evidence="2">
    <location>
        <begin position="155"/>
        <end position="181"/>
    </location>
</feature>
<feature type="topological domain" description="Extracellular" evidence="5">
    <location>
        <begin position="182"/>
        <end position="183"/>
    </location>
</feature>
<feature type="transmembrane region" description="Helical; Name=TM6" evidence="2">
    <location>
        <begin position="184"/>
        <end position="199"/>
    </location>
</feature>
<feature type="topological domain" description="Cytoplasmic" evidence="5">
    <location>
        <begin position="200"/>
        <end position="203"/>
    </location>
</feature>
<feature type="region of interest" description="Short helix H1" evidence="2">
    <location>
        <begin position="37"/>
        <end position="42"/>
    </location>
</feature>
<feature type="region of interest" description="Short helix H2" evidence="2">
    <location>
        <begin position="44"/>
        <end position="50"/>
    </location>
</feature>
<feature type="short sequence motif" description="RxxxFSD motif" evidence="2">
    <location>
        <begin position="12"/>
        <end position="18"/>
    </location>
</feature>
<feature type="site" description="Hydrophobic filter residue 1" evidence="2">
    <location>
        <position position="23"/>
    </location>
</feature>
<feature type="site" description="Hydrophobic filter residue 2" evidence="2">
    <location>
        <position position="27"/>
    </location>
</feature>
<feature type="site" description="Hydrophobic filter residue 3" evidence="2">
    <location>
        <position position="30"/>
    </location>
</feature>
<feature type="mutagenesis site" description="Impaired selectivity. Can conduct both K(+) and Na(+)." evidence="2">
    <original>I</original>
    <variation>A</variation>
    <variation>C</variation>
    <variation>N</variation>
    <location>
        <position position="23"/>
    </location>
</feature>
<feature type="helix" evidence="7">
    <location>
        <begin position="8"/>
        <end position="31"/>
    </location>
</feature>
<feature type="helix" evidence="7">
    <location>
        <begin position="37"/>
        <end position="43"/>
    </location>
</feature>
<feature type="helix" evidence="7">
    <location>
        <begin position="45"/>
        <end position="51"/>
    </location>
</feature>
<feature type="helix" evidence="7">
    <location>
        <begin position="53"/>
        <end position="79"/>
    </location>
</feature>
<feature type="helix" evidence="7">
    <location>
        <begin position="85"/>
        <end position="100"/>
    </location>
</feature>
<feature type="helix" evidence="7">
    <location>
        <begin position="102"/>
        <end position="111"/>
    </location>
</feature>
<feature type="strand" evidence="7">
    <location>
        <begin position="112"/>
        <end position="114"/>
    </location>
</feature>
<feature type="helix" evidence="7">
    <location>
        <begin position="117"/>
        <end position="143"/>
    </location>
</feature>
<feature type="helix" evidence="7">
    <location>
        <begin position="155"/>
        <end position="181"/>
    </location>
</feature>
<feature type="helix" evidence="7">
    <location>
        <begin position="183"/>
        <end position="201"/>
    </location>
</feature>
<proteinExistence type="evidence at protein level"/>
<evidence type="ECO:0000255" key="1"/>
<evidence type="ECO:0000269" key="2">
    <source>
    </source>
</evidence>
<evidence type="ECO:0000303" key="3">
    <source>
    </source>
</evidence>
<evidence type="ECO:0000305" key="4"/>
<evidence type="ECO:0000305" key="5">
    <source>
    </source>
</evidence>
<evidence type="ECO:0000312" key="6">
    <source>
        <dbReference type="EMBL" id="AFY94374.1"/>
    </source>
</evidence>
<evidence type="ECO:0007829" key="7">
    <source>
        <dbReference type="PDB" id="5VRE"/>
    </source>
</evidence>
<gene>
    <name evidence="6" type="ORF">Cha6605_3372</name>
</gene>
<comment type="function">
    <text evidence="2">Potassium channel (PubMed:28723891). The channel is permeable for K(+), Rb(+) and Cs(+), while it is unable to conduct Na(+) (PubMed:28723891).</text>
</comment>
<comment type="catalytic activity">
    <reaction evidence="2">
        <text>K(+)(in) = K(+)(out)</text>
        <dbReference type="Rhea" id="RHEA:29463"/>
        <dbReference type="ChEBI" id="CHEBI:29103"/>
    </reaction>
</comment>
<comment type="subunit">
    <text evidence="2">Homotetramer (PubMed:28723891).</text>
</comment>
<comment type="interaction">
    <interactant intactId="EBI-20710438">
        <id>K9UJK2</id>
    </interactant>
    <interactant intactId="EBI-20710438">
        <id>K9UJK2</id>
        <label>Cha6605_3372</label>
    </interactant>
    <organismsDiffer>false</organismsDiffer>
    <experiments>2</experiments>
</comment>
<comment type="subcellular location">
    <subcellularLocation>
        <location evidence="1">Membrane</location>
        <topology evidence="2">Multi-pass membrane protein</topology>
    </subcellularLocation>
</comment>
<comment type="domain">
    <text evidence="2">In contrast to canonical tetrameric potassium channels, lacks the TVGYG selectivity filter motif and presents a completely different structure. The six transmembrane regions are tightly packed within each subunit without undergoing domain swapping. Transmembranes TM1-TM3 are positioned on the inner circle of the channel tetramer and participate in inter-subunit interactions that are central to the assembly of the ion conduction pore. The RxxxFSD motif within transmembrane TM1 coordinates a network of specific inter- and intra-subunit interactions with other conserved residues on TM2 and TM3 and plays a key role in the tetrameric assembly of the channel. Transmembrane TM4-TM6 are positioned on the periphery of the channel and do not contribute to contacts with neighboring subunits. Transmembranes TM1 and TM2 are linked by an extended strand-like tail and two short helices (H1 and H2) which protrude outwards from the main body of the transmembrane domain and enclose the external open entrance of the ion conduction pore in the channel tetramer. Transmembrane TM3 is bent into two segments (TM3a and TM3b) due to the presence of a conserved proline (Pro-102). Transmembrane TM1 forms the pore-lining inner helix at the center of the channel, creating an hourglass-shaped ion permeation pathway in the channel tetramer. Three hydrophobic residues (Ile-23, Leu-27 and Leu-30) on the C-terminal half of the TM1 helix form a bottleneck along the ion conduction pathway and serve as the selectivity filter of the channel. Ile-23 is probably responsible for channel selectivity.</text>
</comment>
<comment type="similarity">
    <text evidence="4">Belongs to the TMEM175 family.</text>
</comment>
<sequence>MVEAPEQSETGRIEAFSDGVFAIAITLLVLEIKVPQHKIVETVGLVSSLLSLWPSYLAFLTSFASILVMWVNHHRIFSLVARTDHAFFYWNGLLLMLVTFVPFPTALLAEYLIHPQARVAASVYAGIFLAIAIVFNRLWKHAATADRLLAQKADRHEVDAITKQYRFGPGLYLVAFALSFISVWLSVGVCFVLAIYFALRSNA</sequence>
<organism>
    <name type="scientific">Chamaesiphon minutus (strain ATCC 27169 / PCC 6605)</name>
    <dbReference type="NCBI Taxonomy" id="1173020"/>
    <lineage>
        <taxon>Bacteria</taxon>
        <taxon>Bacillati</taxon>
        <taxon>Cyanobacteriota</taxon>
        <taxon>Cyanophyceae</taxon>
        <taxon>Gomontiellales</taxon>
        <taxon>Chamaesiphonaceae</taxon>
        <taxon>Chamaesiphon</taxon>
    </lineage>
</organism>
<name>TM175_CHAP6</name>